<proteinExistence type="inferred from homology"/>
<dbReference type="EC" id="6.1.1.1" evidence="1"/>
<dbReference type="EMBL" id="CP000053">
    <property type="protein sequence ID" value="AAY61728.1"/>
    <property type="molecule type" value="Genomic_DNA"/>
</dbReference>
<dbReference type="SMR" id="Q4UL45"/>
<dbReference type="STRING" id="315456.RF_0877"/>
<dbReference type="KEGG" id="rfe:RF_0877"/>
<dbReference type="eggNOG" id="COG0162">
    <property type="taxonomic scope" value="Bacteria"/>
</dbReference>
<dbReference type="HOGENOM" id="CLU_024003_0_3_5"/>
<dbReference type="OrthoDB" id="9804243at2"/>
<dbReference type="Proteomes" id="UP000008548">
    <property type="component" value="Chromosome"/>
</dbReference>
<dbReference type="GO" id="GO:0005829">
    <property type="term" value="C:cytosol"/>
    <property type="evidence" value="ECO:0007669"/>
    <property type="project" value="TreeGrafter"/>
</dbReference>
<dbReference type="GO" id="GO:0005524">
    <property type="term" value="F:ATP binding"/>
    <property type="evidence" value="ECO:0007669"/>
    <property type="project" value="UniProtKB-UniRule"/>
</dbReference>
<dbReference type="GO" id="GO:0003723">
    <property type="term" value="F:RNA binding"/>
    <property type="evidence" value="ECO:0007669"/>
    <property type="project" value="UniProtKB-KW"/>
</dbReference>
<dbReference type="GO" id="GO:0004831">
    <property type="term" value="F:tyrosine-tRNA ligase activity"/>
    <property type="evidence" value="ECO:0007669"/>
    <property type="project" value="UniProtKB-UniRule"/>
</dbReference>
<dbReference type="GO" id="GO:0006437">
    <property type="term" value="P:tyrosyl-tRNA aminoacylation"/>
    <property type="evidence" value="ECO:0007669"/>
    <property type="project" value="UniProtKB-UniRule"/>
</dbReference>
<dbReference type="CDD" id="cd00165">
    <property type="entry name" value="S4"/>
    <property type="match status" value="1"/>
</dbReference>
<dbReference type="CDD" id="cd00805">
    <property type="entry name" value="TyrRS_core"/>
    <property type="match status" value="1"/>
</dbReference>
<dbReference type="FunFam" id="1.10.240.10:FF:000001">
    <property type="entry name" value="Tyrosine--tRNA ligase"/>
    <property type="match status" value="1"/>
</dbReference>
<dbReference type="FunFam" id="3.40.50.620:FF:000008">
    <property type="entry name" value="Tyrosine--tRNA ligase"/>
    <property type="match status" value="1"/>
</dbReference>
<dbReference type="Gene3D" id="3.40.50.620">
    <property type="entry name" value="HUPs"/>
    <property type="match status" value="1"/>
</dbReference>
<dbReference type="Gene3D" id="3.10.290.10">
    <property type="entry name" value="RNA-binding S4 domain"/>
    <property type="match status" value="1"/>
</dbReference>
<dbReference type="Gene3D" id="1.10.240.10">
    <property type="entry name" value="Tyrosyl-Transfer RNA Synthetase"/>
    <property type="match status" value="1"/>
</dbReference>
<dbReference type="HAMAP" id="MF_02006">
    <property type="entry name" value="Tyr_tRNA_synth_type1"/>
    <property type="match status" value="1"/>
</dbReference>
<dbReference type="InterPro" id="IPR002305">
    <property type="entry name" value="aa-tRNA-synth_Ic"/>
</dbReference>
<dbReference type="InterPro" id="IPR014729">
    <property type="entry name" value="Rossmann-like_a/b/a_fold"/>
</dbReference>
<dbReference type="InterPro" id="IPR002942">
    <property type="entry name" value="S4_RNA-bd"/>
</dbReference>
<dbReference type="InterPro" id="IPR036986">
    <property type="entry name" value="S4_RNA-bd_sf"/>
</dbReference>
<dbReference type="InterPro" id="IPR002307">
    <property type="entry name" value="Tyr-tRNA-ligase"/>
</dbReference>
<dbReference type="InterPro" id="IPR024088">
    <property type="entry name" value="Tyr-tRNA-ligase_bac-type"/>
</dbReference>
<dbReference type="InterPro" id="IPR024107">
    <property type="entry name" value="Tyr-tRNA-ligase_bac_1"/>
</dbReference>
<dbReference type="NCBIfam" id="TIGR00234">
    <property type="entry name" value="tyrS"/>
    <property type="match status" value="1"/>
</dbReference>
<dbReference type="PANTHER" id="PTHR11766:SF0">
    <property type="entry name" value="TYROSINE--TRNA LIGASE, MITOCHONDRIAL"/>
    <property type="match status" value="1"/>
</dbReference>
<dbReference type="PANTHER" id="PTHR11766">
    <property type="entry name" value="TYROSYL-TRNA SYNTHETASE"/>
    <property type="match status" value="1"/>
</dbReference>
<dbReference type="Pfam" id="PF01479">
    <property type="entry name" value="S4"/>
    <property type="match status" value="1"/>
</dbReference>
<dbReference type="Pfam" id="PF00579">
    <property type="entry name" value="tRNA-synt_1b"/>
    <property type="match status" value="1"/>
</dbReference>
<dbReference type="PRINTS" id="PR01040">
    <property type="entry name" value="TRNASYNTHTYR"/>
</dbReference>
<dbReference type="SUPFAM" id="SSF55174">
    <property type="entry name" value="Alpha-L RNA-binding motif"/>
    <property type="match status" value="1"/>
</dbReference>
<dbReference type="SUPFAM" id="SSF52374">
    <property type="entry name" value="Nucleotidylyl transferase"/>
    <property type="match status" value="1"/>
</dbReference>
<dbReference type="PROSITE" id="PS50889">
    <property type="entry name" value="S4"/>
    <property type="match status" value="1"/>
</dbReference>
<name>SYY_RICFE</name>
<gene>
    <name evidence="1" type="primary">tyrS</name>
    <name type="ordered locus">RF_0877</name>
</gene>
<protein>
    <recommendedName>
        <fullName evidence="1">Tyrosine--tRNA ligase</fullName>
        <ecNumber evidence="1">6.1.1.1</ecNumber>
    </recommendedName>
    <alternativeName>
        <fullName evidence="1">Tyrosyl-tRNA synthetase</fullName>
        <shortName evidence="1">TyrRS</shortName>
    </alternativeName>
</protein>
<reference key="1">
    <citation type="journal article" date="2005" name="PLoS Biol.">
        <title>The genome sequence of Rickettsia felis identifies the first putative conjugative plasmid in an obligate intracellular parasite.</title>
        <authorList>
            <person name="Ogata H."/>
            <person name="Renesto P."/>
            <person name="Audic S."/>
            <person name="Robert C."/>
            <person name="Blanc G."/>
            <person name="Fournier P.-E."/>
            <person name="Parinello H."/>
            <person name="Claverie J.-M."/>
            <person name="Raoult D."/>
        </authorList>
    </citation>
    <scope>NUCLEOTIDE SEQUENCE [LARGE SCALE GENOMIC DNA]</scope>
    <source>
        <strain>ATCC VR-1525 / URRWXCal2</strain>
    </source>
</reference>
<organism>
    <name type="scientific">Rickettsia felis (strain ATCC VR-1525 / URRWXCal2)</name>
    <name type="common">Rickettsia azadi</name>
    <dbReference type="NCBI Taxonomy" id="315456"/>
    <lineage>
        <taxon>Bacteria</taxon>
        <taxon>Pseudomonadati</taxon>
        <taxon>Pseudomonadota</taxon>
        <taxon>Alphaproteobacteria</taxon>
        <taxon>Rickettsiales</taxon>
        <taxon>Rickettsiaceae</taxon>
        <taxon>Rickettsieae</taxon>
        <taxon>Rickettsia</taxon>
        <taxon>spotted fever group</taxon>
    </lineage>
</organism>
<comment type="function">
    <text evidence="1">Catalyzes the attachment of tyrosine to tRNA(Tyr) in a two-step reaction: tyrosine is first activated by ATP to form Tyr-AMP and then transferred to the acceptor end of tRNA(Tyr).</text>
</comment>
<comment type="catalytic activity">
    <reaction evidence="1">
        <text>tRNA(Tyr) + L-tyrosine + ATP = L-tyrosyl-tRNA(Tyr) + AMP + diphosphate + H(+)</text>
        <dbReference type="Rhea" id="RHEA:10220"/>
        <dbReference type="Rhea" id="RHEA-COMP:9706"/>
        <dbReference type="Rhea" id="RHEA-COMP:9707"/>
        <dbReference type="ChEBI" id="CHEBI:15378"/>
        <dbReference type="ChEBI" id="CHEBI:30616"/>
        <dbReference type="ChEBI" id="CHEBI:33019"/>
        <dbReference type="ChEBI" id="CHEBI:58315"/>
        <dbReference type="ChEBI" id="CHEBI:78442"/>
        <dbReference type="ChEBI" id="CHEBI:78536"/>
        <dbReference type="ChEBI" id="CHEBI:456215"/>
        <dbReference type="EC" id="6.1.1.1"/>
    </reaction>
</comment>
<comment type="subunit">
    <text evidence="1">Homodimer.</text>
</comment>
<comment type="subcellular location">
    <subcellularLocation>
        <location evidence="1">Cytoplasm</location>
    </subcellularLocation>
</comment>
<comment type="similarity">
    <text evidence="1">Belongs to the class-I aminoacyl-tRNA synthetase family. TyrS type 1 subfamily.</text>
</comment>
<accession>Q4UL45</accession>
<evidence type="ECO:0000255" key="1">
    <source>
        <dbReference type="HAMAP-Rule" id="MF_02006"/>
    </source>
</evidence>
<feature type="chain" id="PRO_0000234760" description="Tyrosine--tRNA ligase">
    <location>
        <begin position="1"/>
        <end position="411"/>
    </location>
</feature>
<feature type="domain" description="S4 RNA-binding" evidence="1">
    <location>
        <begin position="345"/>
        <end position="411"/>
    </location>
</feature>
<feature type="short sequence motif" description="'HIGH' region">
    <location>
        <begin position="39"/>
        <end position="48"/>
    </location>
</feature>
<feature type="short sequence motif" description="'KMSKS' region">
    <location>
        <begin position="231"/>
        <end position="235"/>
    </location>
</feature>
<feature type="binding site" evidence="1">
    <location>
        <position position="34"/>
    </location>
    <ligand>
        <name>L-tyrosine</name>
        <dbReference type="ChEBI" id="CHEBI:58315"/>
    </ligand>
</feature>
<feature type="binding site" evidence="1">
    <location>
        <position position="171"/>
    </location>
    <ligand>
        <name>L-tyrosine</name>
        <dbReference type="ChEBI" id="CHEBI:58315"/>
    </ligand>
</feature>
<feature type="binding site" evidence="1">
    <location>
        <position position="175"/>
    </location>
    <ligand>
        <name>L-tyrosine</name>
        <dbReference type="ChEBI" id="CHEBI:58315"/>
    </ligand>
</feature>
<feature type="binding site" evidence="1">
    <location>
        <position position="234"/>
    </location>
    <ligand>
        <name>ATP</name>
        <dbReference type="ChEBI" id="CHEBI:30616"/>
    </ligand>
</feature>
<sequence>MSFIEEFINKGYFHQCTDLDRLTTITKETKIAAYIGFDCTATSLHIGSLMQIMILRLLQQHGHKPIVIIGGGTSKIGDPTWKDEARKILSKEDIAKNAEGIKKSLSKFIKFGEGESDAIMLDNAEWLDSLNYLDFLRDFGSYFSVNRMLTMDSVRLRLEREQHLSFLEFNYMLLQAYDFYYLSKHYNCSLQLGGSDQWGNIVMGADLTRKISGKDVFGMTTPLLTTSSGAKMGKTAAGAVWLNEDLLSPYDYYQYWRNCEDADIVRFAKLYSELTQEELNKFESLAAEDINSAKKQLAYELTKLCHSEQAAKSALETAVKIFEEGQIDENLPIVVLEQEVLQAGISAYELFHEAGLASSKSEARKLIRGKGAKINDRLVEDENMIINTTFLLDKNVIKLSAGKKRHILVRV</sequence>
<keyword id="KW-0030">Aminoacyl-tRNA synthetase</keyword>
<keyword id="KW-0067">ATP-binding</keyword>
<keyword id="KW-0963">Cytoplasm</keyword>
<keyword id="KW-0436">Ligase</keyword>
<keyword id="KW-0547">Nucleotide-binding</keyword>
<keyword id="KW-0648">Protein biosynthesis</keyword>
<keyword id="KW-0694">RNA-binding</keyword>